<protein>
    <recommendedName>
        <fullName>Scarecrow-like protein 30</fullName>
        <shortName>AtSCL30</shortName>
    </recommendedName>
    <alternativeName>
        <fullName>GRAS family protein 17</fullName>
        <shortName>AtGRAS-17</shortName>
    </alternativeName>
</protein>
<evidence type="ECO:0000250" key="1"/>
<evidence type="ECO:0000255" key="2">
    <source>
        <dbReference type="PROSITE-ProRule" id="PRU01191"/>
    </source>
</evidence>
<evidence type="ECO:0000256" key="3">
    <source>
        <dbReference type="SAM" id="MobiDB-lite"/>
    </source>
</evidence>
<evidence type="ECO:0000269" key="4">
    <source>
    </source>
</evidence>
<evidence type="ECO:0000269" key="5">
    <source>
    </source>
</evidence>
<evidence type="ECO:0000269" key="6">
    <source>
    </source>
</evidence>
<evidence type="ECO:0000305" key="7"/>
<feature type="chain" id="PRO_0000350867" description="Scarecrow-like protein 30">
    <location>
        <begin position="1"/>
        <end position="583"/>
    </location>
</feature>
<feature type="domain" description="GRAS" evidence="2">
    <location>
        <begin position="200"/>
        <end position="579"/>
    </location>
</feature>
<feature type="region of interest" description="Disordered" evidence="3">
    <location>
        <begin position="107"/>
        <end position="154"/>
    </location>
</feature>
<feature type="region of interest" description="Disordered" evidence="3">
    <location>
        <begin position="182"/>
        <end position="205"/>
    </location>
</feature>
<feature type="region of interest" description="Leucine repeat I (LRI)" evidence="2">
    <location>
        <begin position="207"/>
        <end position="266"/>
    </location>
</feature>
<feature type="region of interest" description="VHIID" evidence="2">
    <location>
        <begin position="285"/>
        <end position="350"/>
    </location>
</feature>
<feature type="region of interest" description="Leucine repeat II (LRII)" evidence="2">
    <location>
        <begin position="366"/>
        <end position="398"/>
    </location>
</feature>
<feature type="region of interest" description="PFYRE" evidence="2">
    <location>
        <begin position="407"/>
        <end position="501"/>
    </location>
</feature>
<feature type="region of interest" description="SAW" evidence="2">
    <location>
        <begin position="504"/>
        <end position="579"/>
    </location>
</feature>
<feature type="short sequence motif" description="VHIID" evidence="2">
    <location>
        <begin position="316"/>
        <end position="320"/>
    </location>
</feature>
<feature type="compositionally biased region" description="Polar residues" evidence="3">
    <location>
        <begin position="115"/>
        <end position="124"/>
    </location>
</feature>
<feature type="compositionally biased region" description="Basic and acidic residues" evidence="3">
    <location>
        <begin position="131"/>
        <end position="140"/>
    </location>
</feature>
<keyword id="KW-0025">Alternative splicing</keyword>
<keyword id="KW-0539">Nucleus</keyword>
<keyword id="KW-1185">Reference proteome</keyword>
<keyword id="KW-0804">Transcription</keyword>
<keyword id="KW-0805">Transcription regulation</keyword>
<proteinExistence type="evidence at protein level"/>
<dbReference type="EMBL" id="AK226419">
    <property type="protein sequence ID" value="BAE98563.1"/>
    <property type="molecule type" value="mRNA"/>
</dbReference>
<dbReference type="EMBL" id="AL133314">
    <property type="protein sequence ID" value="CAB62330.1"/>
    <property type="molecule type" value="Genomic_DNA"/>
</dbReference>
<dbReference type="EMBL" id="CP002686">
    <property type="protein sequence ID" value="AEE78178.1"/>
    <property type="molecule type" value="Genomic_DNA"/>
</dbReference>
<dbReference type="EMBL" id="AY087418">
    <property type="protein sequence ID" value="AAM64966.1"/>
    <property type="molecule type" value="mRNA"/>
</dbReference>
<dbReference type="PIR" id="T45597">
    <property type="entry name" value="T45597"/>
</dbReference>
<dbReference type="RefSeq" id="NP_190244.1">
    <molecule id="Q9SNB8-1"/>
    <property type="nucleotide sequence ID" value="NM_114527.2"/>
</dbReference>
<dbReference type="SMR" id="Q9SNB8"/>
<dbReference type="BioGRID" id="9133">
    <property type="interactions" value="85"/>
</dbReference>
<dbReference type="FunCoup" id="Q9SNB8">
    <property type="interactions" value="7"/>
</dbReference>
<dbReference type="IntAct" id="Q9SNB8">
    <property type="interactions" value="84"/>
</dbReference>
<dbReference type="STRING" id="3702.Q9SNB8"/>
<dbReference type="GlyGen" id="Q9SNB8">
    <property type="glycosylation" value="1 site"/>
</dbReference>
<dbReference type="PaxDb" id="3702-AT3G46600.1"/>
<dbReference type="ProteomicsDB" id="232694">
    <molecule id="Q9SNB8-1"/>
</dbReference>
<dbReference type="EnsemblPlants" id="AT3G46600.1">
    <molecule id="Q9SNB8-1"/>
    <property type="protein sequence ID" value="AT3G46600.1"/>
    <property type="gene ID" value="AT3G46600"/>
</dbReference>
<dbReference type="GeneID" id="823813"/>
<dbReference type="Gramene" id="AT3G46600.1">
    <molecule id="Q9SNB8-1"/>
    <property type="protein sequence ID" value="AT3G46600.1"/>
    <property type="gene ID" value="AT3G46600"/>
</dbReference>
<dbReference type="KEGG" id="ath:AT3G46600"/>
<dbReference type="Araport" id="AT3G46600"/>
<dbReference type="TAIR" id="AT3G46600"/>
<dbReference type="eggNOG" id="ENOG502QUZA">
    <property type="taxonomic scope" value="Eukaryota"/>
</dbReference>
<dbReference type="HOGENOM" id="CLU_011924_2_2_1"/>
<dbReference type="InParanoid" id="Q9SNB8"/>
<dbReference type="OMA" id="FTCFNES"/>
<dbReference type="OrthoDB" id="47276at2759"/>
<dbReference type="PhylomeDB" id="Q9SNB8"/>
<dbReference type="CD-CODE" id="9A8A194B">
    <property type="entry name" value="Nuclear speckle"/>
</dbReference>
<dbReference type="PRO" id="PR:Q9SNB8"/>
<dbReference type="Proteomes" id="UP000006548">
    <property type="component" value="Chromosome 3"/>
</dbReference>
<dbReference type="ExpressionAtlas" id="Q9SNB8">
    <property type="expression patterns" value="baseline and differential"/>
</dbReference>
<dbReference type="GO" id="GO:0005634">
    <property type="term" value="C:nucleus"/>
    <property type="evidence" value="ECO:0007669"/>
    <property type="project" value="UniProtKB-SubCell"/>
</dbReference>
<dbReference type="GO" id="GO:0003700">
    <property type="term" value="F:DNA-binding transcription factor activity"/>
    <property type="evidence" value="ECO:0000250"/>
    <property type="project" value="TAIR"/>
</dbReference>
<dbReference type="GO" id="GO:0000976">
    <property type="term" value="F:transcription cis-regulatory region binding"/>
    <property type="evidence" value="ECO:0000353"/>
    <property type="project" value="TAIR"/>
</dbReference>
<dbReference type="GO" id="GO:0006355">
    <property type="term" value="P:regulation of DNA-templated transcription"/>
    <property type="evidence" value="ECO:0000304"/>
    <property type="project" value="TAIR"/>
</dbReference>
<dbReference type="InterPro" id="IPR005202">
    <property type="entry name" value="TF_GRAS"/>
</dbReference>
<dbReference type="PANTHER" id="PTHR31636">
    <property type="entry name" value="OSJNBA0084A10.13 PROTEIN-RELATED"/>
    <property type="match status" value="1"/>
</dbReference>
<dbReference type="Pfam" id="PF03514">
    <property type="entry name" value="GRAS"/>
    <property type="match status" value="1"/>
</dbReference>
<dbReference type="PROSITE" id="PS50985">
    <property type="entry name" value="GRAS"/>
    <property type="match status" value="1"/>
</dbReference>
<comment type="function">
    <text evidence="1">Probable transcription factor involved in plant development.</text>
</comment>
<comment type="subunit">
    <text evidence="4 5">Interacts with SNRNP35 and CYP95.</text>
</comment>
<comment type="subcellular location">
    <subcellularLocation>
        <location evidence="6">Nucleus</location>
    </subcellularLocation>
</comment>
<comment type="alternative products">
    <event type="alternative splicing"/>
    <isoform>
        <id>Q9SNB8-1</id>
        <name>1</name>
        <sequence type="displayed"/>
    </isoform>
    <text>A number of isoforms are produced. According to EST sequences.</text>
</comment>
<comment type="tissue specificity">
    <text evidence="6">Expressed in seedlings, leaves, sepals, stamen and pistil, and in the quiescent center of root meristem.</text>
</comment>
<comment type="similarity">
    <text evidence="7">Belongs to the GRAS family.</text>
</comment>
<reference key="1">
    <citation type="journal article" date="2000" name="Nature">
        <title>Sequence and analysis of chromosome 3 of the plant Arabidopsis thaliana.</title>
        <authorList>
            <person name="Salanoubat M."/>
            <person name="Lemcke K."/>
            <person name="Rieger M."/>
            <person name="Ansorge W."/>
            <person name="Unseld M."/>
            <person name="Fartmann B."/>
            <person name="Valle G."/>
            <person name="Bloecker H."/>
            <person name="Perez-Alonso M."/>
            <person name="Obermaier B."/>
            <person name="Delseny M."/>
            <person name="Boutry M."/>
            <person name="Grivell L.A."/>
            <person name="Mache R."/>
            <person name="Puigdomenech P."/>
            <person name="De Simone V."/>
            <person name="Choisne N."/>
            <person name="Artiguenave F."/>
            <person name="Robert C."/>
            <person name="Brottier P."/>
            <person name="Wincker P."/>
            <person name="Cattolico L."/>
            <person name="Weissenbach J."/>
            <person name="Saurin W."/>
            <person name="Quetier F."/>
            <person name="Schaefer M."/>
            <person name="Mueller-Auer S."/>
            <person name="Gabel C."/>
            <person name="Fuchs M."/>
            <person name="Benes V."/>
            <person name="Wurmbach E."/>
            <person name="Drzonek H."/>
            <person name="Erfle H."/>
            <person name="Jordan N."/>
            <person name="Bangert S."/>
            <person name="Wiedelmann R."/>
            <person name="Kranz H."/>
            <person name="Voss H."/>
            <person name="Holland R."/>
            <person name="Brandt P."/>
            <person name="Nyakatura G."/>
            <person name="Vezzi A."/>
            <person name="D'Angelo M."/>
            <person name="Pallavicini A."/>
            <person name="Toppo S."/>
            <person name="Simionati B."/>
            <person name="Conrad A."/>
            <person name="Hornischer K."/>
            <person name="Kauer G."/>
            <person name="Loehnert T.-H."/>
            <person name="Nordsiek G."/>
            <person name="Reichelt J."/>
            <person name="Scharfe M."/>
            <person name="Schoen O."/>
            <person name="Bargues M."/>
            <person name="Terol J."/>
            <person name="Climent J."/>
            <person name="Navarro P."/>
            <person name="Collado C."/>
            <person name="Perez-Perez A."/>
            <person name="Ottenwaelder B."/>
            <person name="Duchemin D."/>
            <person name="Cooke R."/>
            <person name="Laudie M."/>
            <person name="Berger-Llauro C."/>
            <person name="Purnelle B."/>
            <person name="Masuy D."/>
            <person name="de Haan M."/>
            <person name="Maarse A.C."/>
            <person name="Alcaraz J.-P."/>
            <person name="Cottet A."/>
            <person name="Casacuberta E."/>
            <person name="Monfort A."/>
            <person name="Argiriou A."/>
            <person name="Flores M."/>
            <person name="Liguori R."/>
            <person name="Vitale D."/>
            <person name="Mannhaupt G."/>
            <person name="Haase D."/>
            <person name="Schoof H."/>
            <person name="Rudd S."/>
            <person name="Zaccaria P."/>
            <person name="Mewes H.-W."/>
            <person name="Mayer K.F.X."/>
            <person name="Kaul S."/>
            <person name="Town C.D."/>
            <person name="Koo H.L."/>
            <person name="Tallon L.J."/>
            <person name="Jenkins J."/>
            <person name="Rooney T."/>
            <person name="Rizzo M."/>
            <person name="Walts A."/>
            <person name="Utterback T."/>
            <person name="Fujii C.Y."/>
            <person name="Shea T.P."/>
            <person name="Creasy T.H."/>
            <person name="Haas B."/>
            <person name="Maiti R."/>
            <person name="Wu D."/>
            <person name="Peterson J."/>
            <person name="Van Aken S."/>
            <person name="Pai G."/>
            <person name="Militscher J."/>
            <person name="Sellers P."/>
            <person name="Gill J.E."/>
            <person name="Feldblyum T.V."/>
            <person name="Preuss D."/>
            <person name="Lin X."/>
            <person name="Nierman W.C."/>
            <person name="Salzberg S.L."/>
            <person name="White O."/>
            <person name="Venter J.C."/>
            <person name="Fraser C.M."/>
            <person name="Kaneko T."/>
            <person name="Nakamura Y."/>
            <person name="Sato S."/>
            <person name="Kato T."/>
            <person name="Asamizu E."/>
            <person name="Sasamoto S."/>
            <person name="Kimura T."/>
            <person name="Idesawa K."/>
            <person name="Kawashima K."/>
            <person name="Kishida Y."/>
            <person name="Kiyokawa C."/>
            <person name="Kohara M."/>
            <person name="Matsumoto M."/>
            <person name="Matsuno A."/>
            <person name="Muraki A."/>
            <person name="Nakayama S."/>
            <person name="Nakazaki N."/>
            <person name="Shinpo S."/>
            <person name="Takeuchi C."/>
            <person name="Wada T."/>
            <person name="Watanabe A."/>
            <person name="Yamada M."/>
            <person name="Yasuda M."/>
            <person name="Tabata S."/>
        </authorList>
    </citation>
    <scope>NUCLEOTIDE SEQUENCE [LARGE SCALE GENOMIC DNA]</scope>
    <source>
        <strain>cv. Columbia</strain>
    </source>
</reference>
<reference key="2">
    <citation type="journal article" date="2017" name="Plant J.">
        <title>Araport11: a complete reannotation of the Arabidopsis thaliana reference genome.</title>
        <authorList>
            <person name="Cheng C.Y."/>
            <person name="Krishnakumar V."/>
            <person name="Chan A.P."/>
            <person name="Thibaud-Nissen F."/>
            <person name="Schobel S."/>
            <person name="Town C.D."/>
        </authorList>
    </citation>
    <scope>GENOME REANNOTATION</scope>
    <source>
        <strain>cv. Columbia</strain>
    </source>
</reference>
<reference key="3">
    <citation type="submission" date="2006-07" db="EMBL/GenBank/DDBJ databases">
        <title>Large-scale analysis of RIKEN Arabidopsis full-length (RAFL) cDNAs.</title>
        <authorList>
            <person name="Totoki Y."/>
            <person name="Seki M."/>
            <person name="Ishida J."/>
            <person name="Nakajima M."/>
            <person name="Enju A."/>
            <person name="Kamiya A."/>
            <person name="Narusaka M."/>
            <person name="Shin-i T."/>
            <person name="Nakagawa M."/>
            <person name="Sakamoto N."/>
            <person name="Oishi K."/>
            <person name="Kohara Y."/>
            <person name="Kobayashi M."/>
            <person name="Toyoda A."/>
            <person name="Sakaki Y."/>
            <person name="Sakurai T."/>
            <person name="Iida K."/>
            <person name="Akiyama K."/>
            <person name="Satou M."/>
            <person name="Toyoda T."/>
            <person name="Konagaya A."/>
            <person name="Carninci P."/>
            <person name="Kawai J."/>
            <person name="Hayashizaki Y."/>
            <person name="Shinozaki K."/>
        </authorList>
    </citation>
    <scope>NUCLEOTIDE SEQUENCE [LARGE SCALE MRNA]</scope>
    <source>
        <strain>cv. Columbia</strain>
    </source>
</reference>
<reference key="4">
    <citation type="submission" date="2002-03" db="EMBL/GenBank/DDBJ databases">
        <title>Full-length cDNA from Arabidopsis thaliana.</title>
        <authorList>
            <person name="Brover V.V."/>
            <person name="Troukhan M.E."/>
            <person name="Alexandrov N.A."/>
            <person name="Lu Y.-P."/>
            <person name="Flavell R.B."/>
            <person name="Feldmann K.A."/>
        </authorList>
    </citation>
    <scope>NUCLEOTIDE SEQUENCE [LARGE SCALE MRNA]</scope>
</reference>
<reference key="5">
    <citation type="journal article" date="2004" name="J. Biol. Chem.">
        <title>Interactions of Arabidopsis RS domain containing cyclophilins with SR proteins and U1 and U11 small nuclear ribonucleoprotein-specific proteins suggest their involvement in pre-mRNA Splicing.</title>
        <authorList>
            <person name="Lorkovic Z.J."/>
            <person name="Lopato S."/>
            <person name="Pexa M."/>
            <person name="Lehner R."/>
            <person name="Barta A."/>
        </authorList>
    </citation>
    <scope>INTERACTION WITH CYP95</scope>
</reference>
<reference key="6">
    <citation type="journal article" date="2004" name="Plant Mol. Biol.">
        <title>Genome-wide analysis of the GRAS gene family in rice and Arabidopsis.</title>
        <authorList>
            <person name="Tian C."/>
            <person name="Wan P."/>
            <person name="Sun S."/>
            <person name="Li J."/>
            <person name="Chen M."/>
        </authorList>
    </citation>
    <scope>GENE FAMILY</scope>
</reference>
<reference key="7">
    <citation type="journal article" date="2005" name="RNA">
        <title>Evolutionary conservation of minor U12-type spliceosome between plants and humans.</title>
        <authorList>
            <person name="Lorkovic Z.J."/>
            <person name="Lehner R."/>
            <person name="Forstner C."/>
            <person name="Barta A."/>
        </authorList>
    </citation>
    <scope>INTERACTION WITH SNRNP35</scope>
</reference>
<reference key="8">
    <citation type="journal article" date="2008" name="Plant Mol. Biol.">
        <title>Large-scale analysis of the GRAS gene family in Arabidopsis thaliana.</title>
        <authorList>
            <person name="Lee M.-H."/>
            <person name="Kim B."/>
            <person name="Song S.-K."/>
            <person name="Heo J.-O."/>
            <person name="Yu N.-I."/>
            <person name="Lee S.A."/>
            <person name="Kim M."/>
            <person name="Kim D.G."/>
            <person name="Sohn S.O."/>
            <person name="Lim C.E."/>
            <person name="Chang K.S."/>
            <person name="Lee M.M."/>
            <person name="Lim J."/>
        </authorList>
    </citation>
    <scope>GENE FAMILY</scope>
    <scope>SUBCELLULAR LOCATION</scope>
    <scope>TISSUE SPECIFICITY</scope>
</reference>
<sequence length="583" mass="66629">MDAILPVPVDGFRFDTGSGSCCKPRNNLESGTTNRFTCFNESESQSNPSPTESKVCSDYLPVFKYINDMLMEEDLEGQSCMLEDSLALQAAERSFFEVLQDQTPISGDLEDGSLGNFSSITSLHQPEVSEESTRRYRHRDDDEDDDLESGRKSKLPAISTVDELAEKFEEVLLVCQKNDQGEATEKKTRHVKGSSNRYKQQKSDQPVDMRNLLMQCAQAVASFDQRRAFEKLKEIREHSSRHGDATQRLGYHFAEALEARITGTMTTPISATSSRTSMVDILKAYKGFVQACPTLIMCYFTANRTINELASKATTLHIIDFGILYGFQWPCLIQALSKRDIGPPLLRVTGIELPQSGFRPSERVEETGRRLKRFCDKFNVPFEYSFIAKNWENITLDDLVINSGETTVVNCILRLQYTPDETVSLNSPRDTALKLFRDINPDLFVFAEINGTYNSPFFLTRFREALFHCSSLFDMYETTLSEDDNCRTLVERELIIRDAMSVIACEGSERFARPETYKQWQVRILRAGFRPAKLSKQIVKDGKEIVKERYHKDFVIDNDNHWMFQGWKGRVLYAVSCWKPAKK</sequence>
<accession>Q9SNB8</accession>
<accession>Q8LB52</accession>
<organism>
    <name type="scientific">Arabidopsis thaliana</name>
    <name type="common">Mouse-ear cress</name>
    <dbReference type="NCBI Taxonomy" id="3702"/>
    <lineage>
        <taxon>Eukaryota</taxon>
        <taxon>Viridiplantae</taxon>
        <taxon>Streptophyta</taxon>
        <taxon>Embryophyta</taxon>
        <taxon>Tracheophyta</taxon>
        <taxon>Spermatophyta</taxon>
        <taxon>Magnoliopsida</taxon>
        <taxon>eudicotyledons</taxon>
        <taxon>Gunneridae</taxon>
        <taxon>Pentapetalae</taxon>
        <taxon>rosids</taxon>
        <taxon>malvids</taxon>
        <taxon>Brassicales</taxon>
        <taxon>Brassicaceae</taxon>
        <taxon>Camelineae</taxon>
        <taxon>Arabidopsis</taxon>
    </lineage>
</organism>
<gene>
    <name type="primary">SCL30</name>
    <name type="ordered locus">At3g46600</name>
    <name type="ORF">F12A12.120</name>
</gene>
<name>SCL30_ARATH</name>